<comment type="function">
    <text evidence="1">Shows a weakly myoactive action.</text>
</comment>
<comment type="subcellular location">
    <subcellularLocation>
        <location evidence="4">Secreted</location>
    </subcellularLocation>
</comment>
<comment type="mass spectrometry" mass="1590.8" method="MALDI" evidence="3"/>
<comment type="similarity">
    <text evidence="2">Belongs to the pyrokinin family.</text>
</comment>
<name>PPK6_SHELA</name>
<dbReference type="GO" id="GO:0005576">
    <property type="term" value="C:extracellular region"/>
    <property type="evidence" value="ECO:0007669"/>
    <property type="project" value="UniProtKB-SubCell"/>
</dbReference>
<dbReference type="GO" id="GO:0005184">
    <property type="term" value="F:neuropeptide hormone activity"/>
    <property type="evidence" value="ECO:0007669"/>
    <property type="project" value="InterPro"/>
</dbReference>
<dbReference type="GO" id="GO:0007218">
    <property type="term" value="P:neuropeptide signaling pathway"/>
    <property type="evidence" value="ECO:0007669"/>
    <property type="project" value="UniProtKB-KW"/>
</dbReference>
<dbReference type="InterPro" id="IPR001484">
    <property type="entry name" value="Pyrokinin_CS"/>
</dbReference>
<dbReference type="PROSITE" id="PS00539">
    <property type="entry name" value="PYROKININ"/>
    <property type="match status" value="1"/>
</dbReference>
<proteinExistence type="evidence at protein level"/>
<feature type="peptide" id="PRO_0000044366" description="Pyrokinin-6">
    <location>
        <begin position="1"/>
        <end position="14"/>
    </location>
</feature>
<feature type="modified residue" description="Leucine amide" evidence="3">
    <location>
        <position position="14"/>
    </location>
</feature>
<protein>
    <recommendedName>
        <fullName>Pyrokinin-6</fullName>
    </recommendedName>
    <alternativeName>
        <fullName>FXPRL-amide</fullName>
    </alternativeName>
</protein>
<organism>
    <name type="scientific">Shelfordella lateralis</name>
    <name type="common">Turkestan cockroach</name>
    <name type="synonym">Periplaneta lateralis</name>
    <dbReference type="NCBI Taxonomy" id="36981"/>
    <lineage>
        <taxon>Eukaryota</taxon>
        <taxon>Metazoa</taxon>
        <taxon>Ecdysozoa</taxon>
        <taxon>Arthropoda</taxon>
        <taxon>Hexapoda</taxon>
        <taxon>Insecta</taxon>
        <taxon>Pterygota</taxon>
        <taxon>Neoptera</taxon>
        <taxon>Polyneoptera</taxon>
        <taxon>Dictyoptera</taxon>
        <taxon>Blattodea</taxon>
        <taxon>Blattoidea</taxon>
        <taxon>Blattidae</taxon>
        <taxon>Blattinae</taxon>
        <taxon>Periplaneta</taxon>
    </lineage>
</organism>
<evidence type="ECO:0000250" key="1">
    <source>
        <dbReference type="UniProtKB" id="P82693"/>
    </source>
</evidence>
<evidence type="ECO:0000255" key="2"/>
<evidence type="ECO:0000269" key="3">
    <source>
    </source>
</evidence>
<evidence type="ECO:0000305" key="4"/>
<keyword id="KW-0027">Amidation</keyword>
<keyword id="KW-0903">Direct protein sequencing</keyword>
<keyword id="KW-0527">Neuropeptide</keyword>
<keyword id="KW-0964">Secreted</keyword>
<reference evidence="4" key="1">
    <citation type="journal article" date="2005" name="Peptides">
        <title>Peptidomics of neurohemal organs from species of the cockroach family Blattidae: how do neuropeptides of closely related species differ?</title>
        <authorList>
            <person name="Predel R."/>
            <person name="Gaede G."/>
        </authorList>
    </citation>
    <scope>PROTEIN SEQUENCE</scope>
    <scope>MASS SPECTROMETRY</scope>
    <scope>AMIDATION AT LEU-14</scope>
    <source>
        <tissue evidence="3">Corpora allata</tissue>
    </source>
</reference>
<accession>P84421</accession>
<sequence length="14" mass="1592">SESEVPGMWFGPRL</sequence>